<evidence type="ECO:0000255" key="1"/>
<evidence type="ECO:0000305" key="2"/>
<evidence type="ECO:0007829" key="3">
    <source>
        <dbReference type="PDB" id="4B9G"/>
    </source>
</evidence>
<gene>
    <name type="primary">cssB</name>
</gene>
<protein>
    <recommendedName>
        <fullName>CS6 fimbrial subunit B</fullName>
    </recommendedName>
</protein>
<keyword id="KW-0002">3D-structure</keyword>
<keyword id="KW-0281">Fimbrium</keyword>
<keyword id="KW-0732">Signal</keyword>
<proteinExistence type="evidence at protein level"/>
<reference key="1">
    <citation type="submission" date="1994-01" db="EMBL/GenBank/DDBJ databases">
        <authorList>
            <person name="Wolf M.K."/>
            <person name="de Haan L."/>
            <person name="Cassels F.C."/>
            <person name="Willshaw G.A."/>
            <person name="van Gestel E."/>
            <person name="Gaastra W."/>
            <person name="Warren R."/>
            <person name="Boedeker E.C."/>
        </authorList>
    </citation>
    <scope>NUCLEOTIDE SEQUENCE [GENOMIC DNA]</scope>
    <source>
        <strain>O167:H5 / E10703 / EIEC</strain>
    </source>
</reference>
<dbReference type="EMBL" id="U04844">
    <property type="protein sequence ID" value="AAC45094.1"/>
    <property type="molecule type" value="Unassigned_DNA"/>
</dbReference>
<dbReference type="PIR" id="I83348">
    <property type="entry name" value="I83348"/>
</dbReference>
<dbReference type="RefSeq" id="WP_000913743.1">
    <property type="nucleotide sequence ID" value="NZ_UGCI01000001.1"/>
</dbReference>
<dbReference type="PDB" id="4B9G">
    <property type="method" value="X-ray"/>
    <property type="resolution" value="1.04 A"/>
    <property type="chains" value="A/B=30-167"/>
</dbReference>
<dbReference type="PDB" id="4B9I">
    <property type="method" value="X-ray"/>
    <property type="resolution" value="1.50 A"/>
    <property type="chains" value="A=22-36"/>
</dbReference>
<dbReference type="PDBsum" id="4B9G"/>
<dbReference type="PDBsum" id="4B9I"/>
<dbReference type="SMR" id="P53510"/>
<dbReference type="EvolutionaryTrace" id="P53510"/>
<dbReference type="GO" id="GO:0009289">
    <property type="term" value="C:pilus"/>
    <property type="evidence" value="ECO:0007669"/>
    <property type="project" value="UniProtKB-SubCell"/>
</dbReference>
<dbReference type="Gene3D" id="2.60.40.3480">
    <property type="match status" value="1"/>
</dbReference>
<dbReference type="InterPro" id="IPR031788">
    <property type="entry name" value="CssA/B"/>
</dbReference>
<dbReference type="InterPro" id="IPR053732">
    <property type="entry name" value="Fimbrial_Assembly_Comp"/>
</dbReference>
<dbReference type="Pfam" id="PF16831">
    <property type="entry name" value="CssAB"/>
    <property type="match status" value="1"/>
</dbReference>
<sequence length="167" mass="18022">MLKKIIPAIVLIAGTSGVVNAGNWQYKSLDVNVNIEQNFIPDIDSAVRIIPVNYDSDPKLNSQLYTVEMTIPAGVSAVKIVPTDSLTSSGQQIGKLVNVNNPDQNMNYYIRKDSGAGKFMAGQKGSFSVKENTSYTFSAIYTGGEYPNSGYSSGTYAGHLTVSFYSN</sequence>
<accession>P53510</accession>
<comment type="subcellular location">
    <subcellularLocation>
        <location evidence="2">Fimbrium</location>
    </subcellularLocation>
</comment>
<organism>
    <name type="scientific">Escherichia coli</name>
    <dbReference type="NCBI Taxonomy" id="562"/>
    <lineage>
        <taxon>Bacteria</taxon>
        <taxon>Pseudomonadati</taxon>
        <taxon>Pseudomonadota</taxon>
        <taxon>Gammaproteobacteria</taxon>
        <taxon>Enterobacterales</taxon>
        <taxon>Enterobacteriaceae</taxon>
        <taxon>Escherichia</taxon>
    </lineage>
</organism>
<feature type="signal peptide" evidence="1">
    <location>
        <begin position="1"/>
        <end position="21"/>
    </location>
</feature>
<feature type="chain" id="PRO_0000009184" description="CS6 fimbrial subunit B">
    <location>
        <begin position="22"/>
        <end position="167"/>
    </location>
</feature>
<feature type="helix" evidence="3">
    <location>
        <begin position="43"/>
        <end position="46"/>
    </location>
</feature>
<feature type="strand" evidence="3">
    <location>
        <begin position="47"/>
        <end position="51"/>
    </location>
</feature>
<feature type="strand" evidence="3">
    <location>
        <begin position="53"/>
        <end position="56"/>
    </location>
</feature>
<feature type="strand" evidence="3">
    <location>
        <begin position="63"/>
        <end position="70"/>
    </location>
</feature>
<feature type="strand" evidence="3">
    <location>
        <begin position="77"/>
        <end position="82"/>
    </location>
</feature>
<feature type="strand" evidence="3">
    <location>
        <begin position="86"/>
        <end position="88"/>
    </location>
</feature>
<feature type="strand" evidence="3">
    <location>
        <begin position="91"/>
        <end position="100"/>
    </location>
</feature>
<feature type="strand" evidence="3">
    <location>
        <begin position="105"/>
        <end position="117"/>
    </location>
</feature>
<feature type="strand" evidence="3">
    <location>
        <begin position="134"/>
        <end position="145"/>
    </location>
</feature>
<feature type="strand" evidence="3">
    <location>
        <begin position="153"/>
        <end position="167"/>
    </location>
</feature>
<name>CSSB1_ECOLX</name>